<evidence type="ECO:0000255" key="1">
    <source>
        <dbReference type="HAMAP-Rule" id="MF_01865"/>
    </source>
</evidence>
<evidence type="ECO:0000255" key="2">
    <source>
        <dbReference type="PROSITE-ProRule" id="PRU01266"/>
    </source>
</evidence>
<gene>
    <name evidence="1" type="primary">rimO</name>
    <name type="ordered locus">Ctha_1662</name>
</gene>
<accession>B3QSS3</accession>
<proteinExistence type="inferred from homology"/>
<comment type="function">
    <text evidence="1">Catalyzes the methylthiolation of an aspartic acid residue of ribosomal protein uS12.</text>
</comment>
<comment type="catalytic activity">
    <reaction evidence="1">
        <text>L-aspartate(89)-[ribosomal protein uS12]-hydrogen + (sulfur carrier)-SH + AH2 + 2 S-adenosyl-L-methionine = 3-methylsulfanyl-L-aspartate(89)-[ribosomal protein uS12]-hydrogen + (sulfur carrier)-H + 5'-deoxyadenosine + L-methionine + A + S-adenosyl-L-homocysteine + 2 H(+)</text>
        <dbReference type="Rhea" id="RHEA:37087"/>
        <dbReference type="Rhea" id="RHEA-COMP:10460"/>
        <dbReference type="Rhea" id="RHEA-COMP:10461"/>
        <dbReference type="Rhea" id="RHEA-COMP:14737"/>
        <dbReference type="Rhea" id="RHEA-COMP:14739"/>
        <dbReference type="ChEBI" id="CHEBI:13193"/>
        <dbReference type="ChEBI" id="CHEBI:15378"/>
        <dbReference type="ChEBI" id="CHEBI:17319"/>
        <dbReference type="ChEBI" id="CHEBI:17499"/>
        <dbReference type="ChEBI" id="CHEBI:29917"/>
        <dbReference type="ChEBI" id="CHEBI:29961"/>
        <dbReference type="ChEBI" id="CHEBI:57844"/>
        <dbReference type="ChEBI" id="CHEBI:57856"/>
        <dbReference type="ChEBI" id="CHEBI:59789"/>
        <dbReference type="ChEBI" id="CHEBI:64428"/>
        <dbReference type="ChEBI" id="CHEBI:73599"/>
        <dbReference type="EC" id="2.8.4.4"/>
    </reaction>
</comment>
<comment type="cofactor">
    <cofactor evidence="1">
        <name>[4Fe-4S] cluster</name>
        <dbReference type="ChEBI" id="CHEBI:49883"/>
    </cofactor>
    <text evidence="1">Binds 2 [4Fe-4S] clusters. One cluster is coordinated with 3 cysteines and an exchangeable S-adenosyl-L-methionine.</text>
</comment>
<comment type="subcellular location">
    <subcellularLocation>
        <location evidence="1">Cytoplasm</location>
    </subcellularLocation>
</comment>
<comment type="similarity">
    <text evidence="1">Belongs to the methylthiotransferase family. RimO subfamily.</text>
</comment>
<feature type="chain" id="PRO_0000374771" description="Ribosomal protein uS12 methylthiotransferase RimO">
    <location>
        <begin position="1"/>
        <end position="434"/>
    </location>
</feature>
<feature type="domain" description="MTTase N-terminal" evidence="1">
    <location>
        <begin position="6"/>
        <end position="122"/>
    </location>
</feature>
<feature type="domain" description="Radical SAM core" evidence="2">
    <location>
        <begin position="132"/>
        <end position="361"/>
    </location>
</feature>
<feature type="domain" description="TRAM" evidence="1">
    <location>
        <begin position="364"/>
        <end position="434"/>
    </location>
</feature>
<feature type="binding site" evidence="1">
    <location>
        <position position="15"/>
    </location>
    <ligand>
        <name>[4Fe-4S] cluster</name>
        <dbReference type="ChEBI" id="CHEBI:49883"/>
        <label>1</label>
    </ligand>
</feature>
<feature type="binding site" evidence="1">
    <location>
        <position position="51"/>
    </location>
    <ligand>
        <name>[4Fe-4S] cluster</name>
        <dbReference type="ChEBI" id="CHEBI:49883"/>
        <label>1</label>
    </ligand>
</feature>
<feature type="binding site" evidence="1">
    <location>
        <position position="85"/>
    </location>
    <ligand>
        <name>[4Fe-4S] cluster</name>
        <dbReference type="ChEBI" id="CHEBI:49883"/>
        <label>1</label>
    </ligand>
</feature>
<feature type="binding site" evidence="1">
    <location>
        <position position="146"/>
    </location>
    <ligand>
        <name>[4Fe-4S] cluster</name>
        <dbReference type="ChEBI" id="CHEBI:49883"/>
        <label>2</label>
        <note>4Fe-4S-S-AdoMet</note>
    </ligand>
</feature>
<feature type="binding site" evidence="1">
    <location>
        <position position="150"/>
    </location>
    <ligand>
        <name>[4Fe-4S] cluster</name>
        <dbReference type="ChEBI" id="CHEBI:49883"/>
        <label>2</label>
        <note>4Fe-4S-S-AdoMet</note>
    </ligand>
</feature>
<feature type="binding site" evidence="1">
    <location>
        <position position="153"/>
    </location>
    <ligand>
        <name>[4Fe-4S] cluster</name>
        <dbReference type="ChEBI" id="CHEBI:49883"/>
        <label>2</label>
        <note>4Fe-4S-S-AdoMet</note>
    </ligand>
</feature>
<reference key="1">
    <citation type="submission" date="2008-06" db="EMBL/GenBank/DDBJ databases">
        <title>Complete sequence of Chloroherpeton thalassium ATCC 35110.</title>
        <authorList>
            <consortium name="US DOE Joint Genome Institute"/>
            <person name="Lucas S."/>
            <person name="Copeland A."/>
            <person name="Lapidus A."/>
            <person name="Glavina del Rio T."/>
            <person name="Dalin E."/>
            <person name="Tice H."/>
            <person name="Bruce D."/>
            <person name="Goodwin L."/>
            <person name="Pitluck S."/>
            <person name="Schmutz J."/>
            <person name="Larimer F."/>
            <person name="Land M."/>
            <person name="Hauser L."/>
            <person name="Kyrpides N."/>
            <person name="Mikhailova N."/>
            <person name="Liu Z."/>
            <person name="Li T."/>
            <person name="Zhao F."/>
            <person name="Overmann J."/>
            <person name="Bryant D.A."/>
            <person name="Richardson P."/>
        </authorList>
    </citation>
    <scope>NUCLEOTIDE SEQUENCE [LARGE SCALE GENOMIC DNA]</scope>
    <source>
        <strain>ATCC 35110 / GB-78</strain>
    </source>
</reference>
<name>RIMO_CHLT3</name>
<keyword id="KW-0004">4Fe-4S</keyword>
<keyword id="KW-0963">Cytoplasm</keyword>
<keyword id="KW-0408">Iron</keyword>
<keyword id="KW-0411">Iron-sulfur</keyword>
<keyword id="KW-0479">Metal-binding</keyword>
<keyword id="KW-1185">Reference proteome</keyword>
<keyword id="KW-0949">S-adenosyl-L-methionine</keyword>
<keyword id="KW-0808">Transferase</keyword>
<dbReference type="EC" id="2.8.4.4" evidence="1"/>
<dbReference type="EMBL" id="CP001100">
    <property type="protein sequence ID" value="ACF14120.1"/>
    <property type="molecule type" value="Genomic_DNA"/>
</dbReference>
<dbReference type="RefSeq" id="WP_012500204.1">
    <property type="nucleotide sequence ID" value="NC_011026.1"/>
</dbReference>
<dbReference type="SMR" id="B3QSS3"/>
<dbReference type="STRING" id="517418.Ctha_1662"/>
<dbReference type="KEGG" id="cts:Ctha_1662"/>
<dbReference type="eggNOG" id="COG0621">
    <property type="taxonomic scope" value="Bacteria"/>
</dbReference>
<dbReference type="HOGENOM" id="CLU_018697_0_1_10"/>
<dbReference type="OrthoDB" id="9805215at2"/>
<dbReference type="Proteomes" id="UP000001208">
    <property type="component" value="Chromosome"/>
</dbReference>
<dbReference type="GO" id="GO:0005829">
    <property type="term" value="C:cytosol"/>
    <property type="evidence" value="ECO:0007669"/>
    <property type="project" value="TreeGrafter"/>
</dbReference>
<dbReference type="GO" id="GO:0051539">
    <property type="term" value="F:4 iron, 4 sulfur cluster binding"/>
    <property type="evidence" value="ECO:0007669"/>
    <property type="project" value="UniProtKB-UniRule"/>
</dbReference>
<dbReference type="GO" id="GO:0035599">
    <property type="term" value="F:aspartic acid methylthiotransferase activity"/>
    <property type="evidence" value="ECO:0007669"/>
    <property type="project" value="TreeGrafter"/>
</dbReference>
<dbReference type="GO" id="GO:0046872">
    <property type="term" value="F:metal ion binding"/>
    <property type="evidence" value="ECO:0007669"/>
    <property type="project" value="UniProtKB-KW"/>
</dbReference>
<dbReference type="GO" id="GO:0103039">
    <property type="term" value="F:protein methylthiotransferase activity"/>
    <property type="evidence" value="ECO:0007669"/>
    <property type="project" value="UniProtKB-EC"/>
</dbReference>
<dbReference type="GO" id="GO:0006400">
    <property type="term" value="P:tRNA modification"/>
    <property type="evidence" value="ECO:0007669"/>
    <property type="project" value="InterPro"/>
</dbReference>
<dbReference type="CDD" id="cd01335">
    <property type="entry name" value="Radical_SAM"/>
    <property type="match status" value="1"/>
</dbReference>
<dbReference type="FunFam" id="3.80.30.20:FF:000001">
    <property type="entry name" value="tRNA-2-methylthio-N(6)-dimethylallyladenosine synthase 2"/>
    <property type="match status" value="1"/>
</dbReference>
<dbReference type="Gene3D" id="3.40.50.12160">
    <property type="entry name" value="Methylthiotransferase, N-terminal domain"/>
    <property type="match status" value="1"/>
</dbReference>
<dbReference type="Gene3D" id="2.40.50.140">
    <property type="entry name" value="Nucleic acid-binding proteins"/>
    <property type="match status" value="1"/>
</dbReference>
<dbReference type="Gene3D" id="3.80.30.20">
    <property type="entry name" value="tm_1862 like domain"/>
    <property type="match status" value="1"/>
</dbReference>
<dbReference type="HAMAP" id="MF_01865">
    <property type="entry name" value="MTTase_RimO"/>
    <property type="match status" value="1"/>
</dbReference>
<dbReference type="InterPro" id="IPR006638">
    <property type="entry name" value="Elp3/MiaA/NifB-like_rSAM"/>
</dbReference>
<dbReference type="InterPro" id="IPR005839">
    <property type="entry name" value="Methylthiotransferase"/>
</dbReference>
<dbReference type="InterPro" id="IPR020612">
    <property type="entry name" value="Methylthiotransferase_CS"/>
</dbReference>
<dbReference type="InterPro" id="IPR013848">
    <property type="entry name" value="Methylthiotransferase_N"/>
</dbReference>
<dbReference type="InterPro" id="IPR038135">
    <property type="entry name" value="Methylthiotransferase_N_sf"/>
</dbReference>
<dbReference type="InterPro" id="IPR012340">
    <property type="entry name" value="NA-bd_OB-fold"/>
</dbReference>
<dbReference type="InterPro" id="IPR005840">
    <property type="entry name" value="Ribosomal_uS12_MeSTrfase_RimO"/>
</dbReference>
<dbReference type="InterPro" id="IPR007197">
    <property type="entry name" value="rSAM"/>
</dbReference>
<dbReference type="InterPro" id="IPR023404">
    <property type="entry name" value="rSAM_horseshoe"/>
</dbReference>
<dbReference type="InterPro" id="IPR002792">
    <property type="entry name" value="TRAM_dom"/>
</dbReference>
<dbReference type="NCBIfam" id="TIGR01125">
    <property type="entry name" value="30S ribosomal protein S12 methylthiotransferase RimO"/>
    <property type="match status" value="1"/>
</dbReference>
<dbReference type="NCBIfam" id="TIGR00089">
    <property type="entry name" value="MiaB/RimO family radical SAM methylthiotransferase"/>
    <property type="match status" value="1"/>
</dbReference>
<dbReference type="PANTHER" id="PTHR43837">
    <property type="entry name" value="RIBOSOMAL PROTEIN S12 METHYLTHIOTRANSFERASE RIMO"/>
    <property type="match status" value="1"/>
</dbReference>
<dbReference type="PANTHER" id="PTHR43837:SF1">
    <property type="entry name" value="RIBOSOMAL PROTEIN US12 METHYLTHIOTRANSFERASE RIMO"/>
    <property type="match status" value="1"/>
</dbReference>
<dbReference type="Pfam" id="PF04055">
    <property type="entry name" value="Radical_SAM"/>
    <property type="match status" value="1"/>
</dbReference>
<dbReference type="Pfam" id="PF18693">
    <property type="entry name" value="TRAM_2"/>
    <property type="match status" value="1"/>
</dbReference>
<dbReference type="Pfam" id="PF00919">
    <property type="entry name" value="UPF0004"/>
    <property type="match status" value="1"/>
</dbReference>
<dbReference type="SFLD" id="SFLDG01082">
    <property type="entry name" value="B12-binding_domain_containing"/>
    <property type="match status" value="1"/>
</dbReference>
<dbReference type="SFLD" id="SFLDG01061">
    <property type="entry name" value="methylthiotransferase"/>
    <property type="match status" value="1"/>
</dbReference>
<dbReference type="SFLD" id="SFLDF00274">
    <property type="entry name" value="ribosomal_protein_S12_methylth"/>
    <property type="match status" value="1"/>
</dbReference>
<dbReference type="SMART" id="SM00729">
    <property type="entry name" value="Elp3"/>
    <property type="match status" value="1"/>
</dbReference>
<dbReference type="SUPFAM" id="SSF102114">
    <property type="entry name" value="Radical SAM enzymes"/>
    <property type="match status" value="1"/>
</dbReference>
<dbReference type="PROSITE" id="PS51449">
    <property type="entry name" value="MTTASE_N"/>
    <property type="match status" value="1"/>
</dbReference>
<dbReference type="PROSITE" id="PS01278">
    <property type="entry name" value="MTTASE_RADICAL"/>
    <property type="match status" value="1"/>
</dbReference>
<dbReference type="PROSITE" id="PS51918">
    <property type="entry name" value="RADICAL_SAM"/>
    <property type="match status" value="1"/>
</dbReference>
<dbReference type="PROSITE" id="PS50926">
    <property type="entry name" value="TRAM"/>
    <property type="match status" value="1"/>
</dbReference>
<protein>
    <recommendedName>
        <fullName evidence="1">Ribosomal protein uS12 methylthiotransferase RimO</fullName>
        <shortName evidence="1">uS12 MTTase</shortName>
        <shortName evidence="1">uS12 methylthiotransferase</shortName>
        <ecNumber evidence="1">2.8.4.4</ecNumber>
    </recommendedName>
    <alternativeName>
        <fullName evidence="1">Ribosomal protein uS12 (aspartate-C(3))-methylthiotransferase</fullName>
    </alternativeName>
    <alternativeName>
        <fullName evidence="1">Ribosome maturation factor RimO</fullName>
    </alternativeName>
</protein>
<sequence>METKRSKLYLLTLGCSKNMVDSEVLLAQAKANQIYLAEDFHEADTILINTCGFIDKSKQESIDQILEAIRFKEAKRIKKVIVFGCLSERYKDALREEIPEVDCYFGTRDLSQIIAELGGHYKTHLLGERELLTPPYFSYLKISEGCDHPCAFCAIPLMRGKQVSRPIDELLLEAKKLKEKGVRELCLIAQDTTYYGHDLNGKRQLAELLQRLSDLQFDWIRLLYAYPAMFPTDILPVMRERENICKYLDLPLQHVSDEMLKSMRRGISKRKTTELIAQIRSEVPGIRLRTTMLVGYPNETEEQFSELVEFVRETQFDRLGCFAYSHEEGTEAHELPDTLTEEEKERRVELLMAAQEEIAYAKNQALVGSFMPVLIERFEANFAIGRTEYDAPEVDNEVVIALDEAEQKKVKVGTFYQARITDAEAFDLFGSLVL</sequence>
<organism>
    <name type="scientific">Chloroherpeton thalassium (strain ATCC 35110 / GB-78)</name>
    <dbReference type="NCBI Taxonomy" id="517418"/>
    <lineage>
        <taxon>Bacteria</taxon>
        <taxon>Pseudomonadati</taxon>
        <taxon>Chlorobiota</taxon>
        <taxon>Chlorobiia</taxon>
        <taxon>Chlorobiales</taxon>
        <taxon>Chloroherpetonaceae</taxon>
        <taxon>Chloroherpeton</taxon>
    </lineage>
</organism>